<organism>
    <name type="scientific">Arabidopsis thaliana</name>
    <name type="common">Mouse-ear cress</name>
    <dbReference type="NCBI Taxonomy" id="3702"/>
    <lineage>
        <taxon>Eukaryota</taxon>
        <taxon>Viridiplantae</taxon>
        <taxon>Streptophyta</taxon>
        <taxon>Embryophyta</taxon>
        <taxon>Tracheophyta</taxon>
        <taxon>Spermatophyta</taxon>
        <taxon>Magnoliopsida</taxon>
        <taxon>eudicotyledons</taxon>
        <taxon>Gunneridae</taxon>
        <taxon>Pentapetalae</taxon>
        <taxon>rosids</taxon>
        <taxon>malvids</taxon>
        <taxon>Brassicales</taxon>
        <taxon>Brassicaceae</taxon>
        <taxon>Camelineae</taxon>
        <taxon>Arabidopsis</taxon>
    </lineage>
</organism>
<dbReference type="EMBL" id="AC004561">
    <property type="protein sequence ID" value="AAC95181.1"/>
    <property type="molecule type" value="Genomic_DNA"/>
</dbReference>
<dbReference type="EMBL" id="CP002685">
    <property type="protein sequence ID" value="AEC08275.1"/>
    <property type="molecule type" value="Genomic_DNA"/>
</dbReference>
<dbReference type="EMBL" id="AF428354">
    <property type="protein sequence ID" value="AAL16284.1"/>
    <property type="molecule type" value="mRNA"/>
</dbReference>
<dbReference type="EMBL" id="BT002621">
    <property type="protein sequence ID" value="AAO11537.1"/>
    <property type="molecule type" value="mRNA"/>
</dbReference>
<dbReference type="PIR" id="A84698">
    <property type="entry name" value="A84698"/>
</dbReference>
<dbReference type="RefSeq" id="NP_180518.1">
    <property type="nucleotide sequence ID" value="NM_128511.2"/>
</dbReference>
<dbReference type="SMR" id="Q9ZW36"/>
<dbReference type="BioGRID" id="2857">
    <property type="interactions" value="47"/>
</dbReference>
<dbReference type="FunCoup" id="Q9ZW36">
    <property type="interactions" value="4474"/>
</dbReference>
<dbReference type="IntAct" id="Q9ZW36">
    <property type="interactions" value="46"/>
</dbReference>
<dbReference type="STRING" id="3702.Q9ZW36"/>
<dbReference type="iPTMnet" id="Q9ZW36"/>
<dbReference type="PaxDb" id="3702-AT2G29580.1"/>
<dbReference type="ProteomicsDB" id="240256"/>
<dbReference type="EnsemblPlants" id="AT2G29580.1">
    <property type="protein sequence ID" value="AT2G29580.1"/>
    <property type="gene ID" value="AT2G29580"/>
</dbReference>
<dbReference type="GeneID" id="817507"/>
<dbReference type="Gramene" id="AT2G29580.1">
    <property type="protein sequence ID" value="AT2G29580.1"/>
    <property type="gene ID" value="AT2G29580"/>
</dbReference>
<dbReference type="KEGG" id="ath:AT2G29580"/>
<dbReference type="Araport" id="AT2G29580"/>
<dbReference type="TAIR" id="AT2G29580">
    <property type="gene designation" value="MAC5B"/>
</dbReference>
<dbReference type="eggNOG" id="KOG0153">
    <property type="taxonomic scope" value="Eukaryota"/>
</dbReference>
<dbReference type="HOGENOM" id="CLU_027112_2_0_1"/>
<dbReference type="InParanoid" id="Q9ZW36"/>
<dbReference type="OMA" id="ECICARP"/>
<dbReference type="OrthoDB" id="10259600at2759"/>
<dbReference type="PhylomeDB" id="Q9ZW36"/>
<dbReference type="PRO" id="PR:Q9ZW36"/>
<dbReference type="Proteomes" id="UP000006548">
    <property type="component" value="Chromosome 2"/>
</dbReference>
<dbReference type="ExpressionAtlas" id="Q9ZW36">
    <property type="expression patterns" value="baseline and differential"/>
</dbReference>
<dbReference type="GO" id="GO:0003677">
    <property type="term" value="F:DNA binding"/>
    <property type="evidence" value="ECO:0007669"/>
    <property type="project" value="UniProtKB-KW"/>
</dbReference>
<dbReference type="GO" id="GO:0003729">
    <property type="term" value="F:mRNA binding"/>
    <property type="evidence" value="ECO:0000314"/>
    <property type="project" value="TAIR"/>
</dbReference>
<dbReference type="GO" id="GO:0008270">
    <property type="term" value="F:zinc ion binding"/>
    <property type="evidence" value="ECO:0007669"/>
    <property type="project" value="UniProtKB-KW"/>
</dbReference>
<dbReference type="CDD" id="cd12224">
    <property type="entry name" value="RRM_RBM22"/>
    <property type="match status" value="1"/>
</dbReference>
<dbReference type="FunFam" id="3.30.70.330:FF:000476">
    <property type="entry name" value="Zinc finger CCCH domain-containing protein 4"/>
    <property type="match status" value="1"/>
</dbReference>
<dbReference type="FunFam" id="4.10.1000.10:FF:000036">
    <property type="entry name" value="Zinc finger CCCH domain-containing protein 4"/>
    <property type="match status" value="1"/>
</dbReference>
<dbReference type="Gene3D" id="3.30.70.330">
    <property type="match status" value="1"/>
</dbReference>
<dbReference type="Gene3D" id="4.10.1000.10">
    <property type="entry name" value="Zinc finger, CCCH-type"/>
    <property type="match status" value="1"/>
</dbReference>
<dbReference type="InterPro" id="IPR039171">
    <property type="entry name" value="Cwc2/Slt11"/>
</dbReference>
<dbReference type="InterPro" id="IPR012677">
    <property type="entry name" value="Nucleotide-bd_a/b_plait_sf"/>
</dbReference>
<dbReference type="InterPro" id="IPR035979">
    <property type="entry name" value="RBD_domain_sf"/>
</dbReference>
<dbReference type="InterPro" id="IPR000504">
    <property type="entry name" value="RRM_dom"/>
</dbReference>
<dbReference type="InterPro" id="IPR048995">
    <property type="entry name" value="STL11/RBM22-like_N"/>
</dbReference>
<dbReference type="InterPro" id="IPR032297">
    <property type="entry name" value="Torus"/>
</dbReference>
<dbReference type="InterPro" id="IPR000571">
    <property type="entry name" value="Znf_CCCH"/>
</dbReference>
<dbReference type="InterPro" id="IPR036855">
    <property type="entry name" value="Znf_CCCH_sf"/>
</dbReference>
<dbReference type="PANTHER" id="PTHR14089">
    <property type="entry name" value="PRE-MRNA-SPLICING FACTOR RBM22"/>
    <property type="match status" value="1"/>
</dbReference>
<dbReference type="PANTHER" id="PTHR14089:SF6">
    <property type="entry name" value="PRE-MRNA-SPLICING FACTOR RBM22"/>
    <property type="match status" value="1"/>
</dbReference>
<dbReference type="Pfam" id="PF00076">
    <property type="entry name" value="RRM_1"/>
    <property type="match status" value="1"/>
</dbReference>
<dbReference type="Pfam" id="PF21369">
    <property type="entry name" value="STL11_N"/>
    <property type="match status" value="1"/>
</dbReference>
<dbReference type="Pfam" id="PF16131">
    <property type="entry name" value="Torus"/>
    <property type="match status" value="1"/>
</dbReference>
<dbReference type="SMART" id="SM00360">
    <property type="entry name" value="RRM"/>
    <property type="match status" value="1"/>
</dbReference>
<dbReference type="SMART" id="SM00356">
    <property type="entry name" value="ZnF_C3H1"/>
    <property type="match status" value="1"/>
</dbReference>
<dbReference type="SUPFAM" id="SSF90229">
    <property type="entry name" value="CCCH zinc finger"/>
    <property type="match status" value="1"/>
</dbReference>
<dbReference type="SUPFAM" id="SSF54928">
    <property type="entry name" value="RNA-binding domain, RBD"/>
    <property type="match status" value="1"/>
</dbReference>
<dbReference type="PROSITE" id="PS50102">
    <property type="entry name" value="RRM"/>
    <property type="match status" value="1"/>
</dbReference>
<dbReference type="PROSITE" id="PS50103">
    <property type="entry name" value="ZF_C3H1"/>
    <property type="match status" value="1"/>
</dbReference>
<comment type="interaction">
    <interactant intactId="EBI-15195245">
        <id>Q9ZW36</id>
    </interactant>
    <interactant intactId="EBI-15201298">
        <id>Q9SY59</id>
        <label>NFXL1</label>
    </interactant>
    <organismsDiffer>false</organismsDiffer>
    <experiments>3</experiments>
</comment>
<comment type="interaction">
    <interactant intactId="EBI-15195245">
        <id>Q9ZW36</id>
    </interactant>
    <interactant intactId="EBI-3133327">
        <id>O82277</id>
        <label>TCP10</label>
    </interactant>
    <organismsDiffer>false</organismsDiffer>
    <experiments>3</experiments>
</comment>
<comment type="interaction">
    <interactant intactId="EBI-15195245">
        <id>Q9ZW36</id>
    </interactant>
    <interactant intactId="EBI-4424877">
        <id>Q9S7W5</id>
        <label>TCP13</label>
    </interactant>
    <organismsDiffer>false</organismsDiffer>
    <experiments>3</experiments>
</comment>
<comment type="interaction">
    <interactant intactId="EBI-15195245">
        <id>Q9ZW36</id>
    </interactant>
    <interactant intactId="EBI-4426557">
        <id>Q84MB2</id>
        <label>TIFY8</label>
    </interactant>
    <organismsDiffer>false</organismsDiffer>
    <experiments>3</experiments>
</comment>
<proteinExistence type="evidence at protein level"/>
<sequence length="483" mass="54252">MAHRILRDHEADGWERSDFPIICESCLGDNPYVRMTKANYDKECKICTRPFTVFRWRPGRDARYKKTEVCQTCCKLKNVCQVCLLDLEYGLPVQVRDTALNISTHDSIPKSDVNREFFAEEHDRKTRAGLDYESSFGKIRPNDTIRMLQRTTPYYKRNRAHICSFFIRGECTRGDECPYRHEMPETGELSQQNIKDRYYGVNDPVALKLLGKAGEMGTLESPEDQSIRTLYVGGLNSRVLEQDIRDQFYAHGEIESIRILAEKACAFVTYTTREGAEKAAEELSNRLVVNGQRLKLTWGRPQVPKPDQDGSNQQGSVAHSGLLPRAVISQQQNQPPPMLQYYMHPPPPQPPHQDRPFYPSMDPQRMGAVSSSKESGSSTSDNRGASSSSYTMPPHGHYPQHQPYPPPSYGGYMQPPYQQYPPYHHGHSQQADHDYPQQPGPGSRPNPPHPSSVSAPPPDSVSAAPSGSSQQSADAAVTTGSSQ</sequence>
<feature type="chain" id="PRO_0000371984" description="Zinc finger CCCH domain-containing protein 25">
    <location>
        <begin position="1"/>
        <end position="483"/>
    </location>
</feature>
<feature type="domain" description="RRM" evidence="1">
    <location>
        <begin position="228"/>
        <end position="301"/>
    </location>
</feature>
<feature type="zinc finger region" description="C3H1-type" evidence="2">
    <location>
        <begin position="157"/>
        <end position="184"/>
    </location>
</feature>
<feature type="region of interest" description="Disordered" evidence="3">
    <location>
        <begin position="298"/>
        <end position="317"/>
    </location>
</feature>
<feature type="region of interest" description="Disordered" evidence="3">
    <location>
        <begin position="336"/>
        <end position="483"/>
    </location>
</feature>
<feature type="compositionally biased region" description="Pro residues" evidence="3">
    <location>
        <begin position="336"/>
        <end position="351"/>
    </location>
</feature>
<feature type="compositionally biased region" description="Low complexity" evidence="3">
    <location>
        <begin position="370"/>
        <end position="380"/>
    </location>
</feature>
<feature type="compositionally biased region" description="Polar residues" evidence="3">
    <location>
        <begin position="381"/>
        <end position="391"/>
    </location>
</feature>
<feature type="compositionally biased region" description="Low complexity" evidence="3">
    <location>
        <begin position="392"/>
        <end position="401"/>
    </location>
</feature>
<feature type="compositionally biased region" description="Low complexity" evidence="3">
    <location>
        <begin position="409"/>
        <end position="423"/>
    </location>
</feature>
<feature type="compositionally biased region" description="Pro residues" evidence="3">
    <location>
        <begin position="438"/>
        <end position="459"/>
    </location>
</feature>
<feature type="compositionally biased region" description="Low complexity" evidence="3">
    <location>
        <begin position="460"/>
        <end position="476"/>
    </location>
</feature>
<name>C3H25_ARATH</name>
<evidence type="ECO:0000255" key="1">
    <source>
        <dbReference type="PROSITE-ProRule" id="PRU00176"/>
    </source>
</evidence>
<evidence type="ECO:0000255" key="2">
    <source>
        <dbReference type="PROSITE-ProRule" id="PRU00723"/>
    </source>
</evidence>
<evidence type="ECO:0000256" key="3">
    <source>
        <dbReference type="SAM" id="MobiDB-lite"/>
    </source>
</evidence>
<gene>
    <name type="ordered locus">At2g29580</name>
    <name type="ORF">F16P2.4</name>
</gene>
<protein>
    <recommendedName>
        <fullName>Zinc finger CCCH domain-containing protein 25</fullName>
        <shortName>AtC3H25</shortName>
    </recommendedName>
</protein>
<accession>Q9ZW36</accession>
<keyword id="KW-0238">DNA-binding</keyword>
<keyword id="KW-0479">Metal-binding</keyword>
<keyword id="KW-1185">Reference proteome</keyword>
<keyword id="KW-0694">RNA-binding</keyword>
<keyword id="KW-0862">Zinc</keyword>
<keyword id="KW-0863">Zinc-finger</keyword>
<reference key="1">
    <citation type="journal article" date="1999" name="Nature">
        <title>Sequence and analysis of chromosome 2 of the plant Arabidopsis thaliana.</title>
        <authorList>
            <person name="Lin X."/>
            <person name="Kaul S."/>
            <person name="Rounsley S.D."/>
            <person name="Shea T.P."/>
            <person name="Benito M.-I."/>
            <person name="Town C.D."/>
            <person name="Fujii C.Y."/>
            <person name="Mason T.M."/>
            <person name="Bowman C.L."/>
            <person name="Barnstead M.E."/>
            <person name="Feldblyum T.V."/>
            <person name="Buell C.R."/>
            <person name="Ketchum K.A."/>
            <person name="Lee J.J."/>
            <person name="Ronning C.M."/>
            <person name="Koo H.L."/>
            <person name="Moffat K.S."/>
            <person name="Cronin L.A."/>
            <person name="Shen M."/>
            <person name="Pai G."/>
            <person name="Van Aken S."/>
            <person name="Umayam L."/>
            <person name="Tallon L.J."/>
            <person name="Gill J.E."/>
            <person name="Adams M.D."/>
            <person name="Carrera A.J."/>
            <person name="Creasy T.H."/>
            <person name="Goodman H.M."/>
            <person name="Somerville C.R."/>
            <person name="Copenhaver G.P."/>
            <person name="Preuss D."/>
            <person name="Nierman W.C."/>
            <person name="White O."/>
            <person name="Eisen J.A."/>
            <person name="Salzberg S.L."/>
            <person name="Fraser C.M."/>
            <person name="Venter J.C."/>
        </authorList>
    </citation>
    <scope>NUCLEOTIDE SEQUENCE [LARGE SCALE GENOMIC DNA]</scope>
    <source>
        <strain>cv. Columbia</strain>
    </source>
</reference>
<reference key="2">
    <citation type="journal article" date="2017" name="Plant J.">
        <title>Araport11: a complete reannotation of the Arabidopsis thaliana reference genome.</title>
        <authorList>
            <person name="Cheng C.Y."/>
            <person name="Krishnakumar V."/>
            <person name="Chan A.P."/>
            <person name="Thibaud-Nissen F."/>
            <person name="Schobel S."/>
            <person name="Town C.D."/>
        </authorList>
    </citation>
    <scope>GENOME REANNOTATION</scope>
    <source>
        <strain>cv. Columbia</strain>
    </source>
</reference>
<reference key="3">
    <citation type="journal article" date="2003" name="Science">
        <title>Empirical analysis of transcriptional activity in the Arabidopsis genome.</title>
        <authorList>
            <person name="Yamada K."/>
            <person name="Lim J."/>
            <person name="Dale J.M."/>
            <person name="Chen H."/>
            <person name="Shinn P."/>
            <person name="Palm C.J."/>
            <person name="Southwick A.M."/>
            <person name="Wu H.C."/>
            <person name="Kim C.J."/>
            <person name="Nguyen M."/>
            <person name="Pham P.K."/>
            <person name="Cheuk R.F."/>
            <person name="Karlin-Newmann G."/>
            <person name="Liu S.X."/>
            <person name="Lam B."/>
            <person name="Sakano H."/>
            <person name="Wu T."/>
            <person name="Yu G."/>
            <person name="Miranda M."/>
            <person name="Quach H.L."/>
            <person name="Tripp M."/>
            <person name="Chang C.H."/>
            <person name="Lee J.M."/>
            <person name="Toriumi M.J."/>
            <person name="Chan M.M."/>
            <person name="Tang C.C."/>
            <person name="Onodera C.S."/>
            <person name="Deng J.M."/>
            <person name="Akiyama K."/>
            <person name="Ansari Y."/>
            <person name="Arakawa T."/>
            <person name="Banh J."/>
            <person name="Banno F."/>
            <person name="Bowser L."/>
            <person name="Brooks S.Y."/>
            <person name="Carninci P."/>
            <person name="Chao Q."/>
            <person name="Choy N."/>
            <person name="Enju A."/>
            <person name="Goldsmith A.D."/>
            <person name="Gurjal M."/>
            <person name="Hansen N.F."/>
            <person name="Hayashizaki Y."/>
            <person name="Johnson-Hopson C."/>
            <person name="Hsuan V.W."/>
            <person name="Iida K."/>
            <person name="Karnes M."/>
            <person name="Khan S."/>
            <person name="Koesema E."/>
            <person name="Ishida J."/>
            <person name="Jiang P.X."/>
            <person name="Jones T."/>
            <person name="Kawai J."/>
            <person name="Kamiya A."/>
            <person name="Meyers C."/>
            <person name="Nakajima M."/>
            <person name="Narusaka M."/>
            <person name="Seki M."/>
            <person name="Sakurai T."/>
            <person name="Satou M."/>
            <person name="Tamse R."/>
            <person name="Vaysberg M."/>
            <person name="Wallender E.K."/>
            <person name="Wong C."/>
            <person name="Yamamura Y."/>
            <person name="Yuan S."/>
            <person name="Shinozaki K."/>
            <person name="Davis R.W."/>
            <person name="Theologis A."/>
            <person name="Ecker J.R."/>
        </authorList>
    </citation>
    <scope>NUCLEOTIDE SEQUENCE [LARGE SCALE MRNA]</scope>
    <source>
        <strain>cv. Columbia</strain>
    </source>
</reference>
<reference key="4">
    <citation type="journal article" date="2008" name="BMC Genomics">
        <title>Genome-wide analysis of CCCH zinc finger family in Arabidopsis and rice.</title>
        <authorList>
            <person name="Wang D."/>
            <person name="Guo Y."/>
            <person name="Wu C."/>
            <person name="Yang G."/>
            <person name="Li Y."/>
            <person name="Zheng C."/>
        </authorList>
    </citation>
    <scope>NOMENCLATURE</scope>
</reference>